<name>TATA_MARSD</name>
<keyword id="KW-0997">Cell inner membrane</keyword>
<keyword id="KW-1003">Cell membrane</keyword>
<keyword id="KW-0472">Membrane</keyword>
<keyword id="KW-0653">Protein transport</keyword>
<keyword id="KW-1185">Reference proteome</keyword>
<keyword id="KW-0811">Translocation</keyword>
<keyword id="KW-0812">Transmembrane</keyword>
<keyword id="KW-1133">Transmembrane helix</keyword>
<keyword id="KW-0813">Transport</keyword>
<comment type="function">
    <text evidence="1">Part of the twin-arginine translocation (Tat) system that transports large folded proteins containing a characteristic twin-arginine motif in their signal peptide across membranes. TatA could form the protein-conducting channel of the Tat system.</text>
</comment>
<comment type="subunit">
    <text evidence="1">The Tat system comprises two distinct complexes: a TatABC complex, containing multiple copies of TatA, TatB and TatC subunits, and a separate TatA complex, containing only TatA subunits. Substrates initially bind to the TatABC complex, which probably triggers association of the separate TatA complex to form the active translocon.</text>
</comment>
<comment type="subcellular location">
    <subcellularLocation>
        <location evidence="1">Cell inner membrane</location>
        <topology evidence="1">Single-pass membrane protein</topology>
    </subcellularLocation>
</comment>
<comment type="similarity">
    <text evidence="1">Belongs to the TatA/E family.</text>
</comment>
<dbReference type="EMBL" id="CP001649">
    <property type="protein sequence ID" value="ACS80462.1"/>
    <property type="molecule type" value="Genomic_DNA"/>
</dbReference>
<dbReference type="RefSeq" id="WP_015852278.1">
    <property type="nucleotide sequence ID" value="NC_012881.1"/>
</dbReference>
<dbReference type="SMR" id="C6BXF6"/>
<dbReference type="STRING" id="526222.Desal_2406"/>
<dbReference type="KEGG" id="dsa:Desal_2406"/>
<dbReference type="eggNOG" id="COG1826">
    <property type="taxonomic scope" value="Bacteria"/>
</dbReference>
<dbReference type="HOGENOM" id="CLU_086034_6_0_7"/>
<dbReference type="OrthoDB" id="9813726at2"/>
<dbReference type="Proteomes" id="UP000002601">
    <property type="component" value="Chromosome"/>
</dbReference>
<dbReference type="GO" id="GO:0033281">
    <property type="term" value="C:TAT protein transport complex"/>
    <property type="evidence" value="ECO:0007669"/>
    <property type="project" value="UniProtKB-UniRule"/>
</dbReference>
<dbReference type="GO" id="GO:0008320">
    <property type="term" value="F:protein transmembrane transporter activity"/>
    <property type="evidence" value="ECO:0007669"/>
    <property type="project" value="UniProtKB-UniRule"/>
</dbReference>
<dbReference type="GO" id="GO:0043953">
    <property type="term" value="P:protein transport by the Tat complex"/>
    <property type="evidence" value="ECO:0007669"/>
    <property type="project" value="UniProtKB-UniRule"/>
</dbReference>
<dbReference type="Gene3D" id="1.20.5.3310">
    <property type="match status" value="1"/>
</dbReference>
<dbReference type="HAMAP" id="MF_00236">
    <property type="entry name" value="TatA_E"/>
    <property type="match status" value="1"/>
</dbReference>
<dbReference type="InterPro" id="IPR003369">
    <property type="entry name" value="TatA/B/E"/>
</dbReference>
<dbReference type="InterPro" id="IPR006312">
    <property type="entry name" value="TatA/E"/>
</dbReference>
<dbReference type="NCBIfam" id="TIGR01411">
    <property type="entry name" value="tatAE"/>
    <property type="match status" value="1"/>
</dbReference>
<dbReference type="PANTHER" id="PTHR42982">
    <property type="entry name" value="SEC-INDEPENDENT PROTEIN TRANSLOCASE PROTEIN TATA"/>
    <property type="match status" value="1"/>
</dbReference>
<dbReference type="PANTHER" id="PTHR42982:SF1">
    <property type="entry name" value="SEC-INDEPENDENT PROTEIN TRANSLOCASE PROTEIN TATA"/>
    <property type="match status" value="1"/>
</dbReference>
<dbReference type="Pfam" id="PF02416">
    <property type="entry name" value="TatA_B_E"/>
    <property type="match status" value="1"/>
</dbReference>
<organism>
    <name type="scientific">Maridesulfovibrio salexigens (strain ATCC 14822 / DSM 2638 / NCIMB 8403 / VKM B-1763)</name>
    <name type="common">Desulfovibrio salexigens</name>
    <dbReference type="NCBI Taxonomy" id="526222"/>
    <lineage>
        <taxon>Bacteria</taxon>
        <taxon>Pseudomonadati</taxon>
        <taxon>Thermodesulfobacteriota</taxon>
        <taxon>Desulfovibrionia</taxon>
        <taxon>Desulfovibrionales</taxon>
        <taxon>Desulfovibrionaceae</taxon>
        <taxon>Maridesulfovibrio</taxon>
    </lineage>
</organism>
<feature type="chain" id="PRO_1000204436" description="Sec-independent protein translocase protein TatA">
    <location>
        <begin position="1"/>
        <end position="61"/>
    </location>
</feature>
<feature type="transmembrane region" description="Helical" evidence="1">
    <location>
        <begin position="1"/>
        <end position="21"/>
    </location>
</feature>
<gene>
    <name evidence="1" type="primary">tatA</name>
    <name type="ordered locus">Desal_2406</name>
</gene>
<evidence type="ECO:0000255" key="1">
    <source>
        <dbReference type="HAMAP-Rule" id="MF_00236"/>
    </source>
</evidence>
<sequence length="61" mass="6516">MFGLGITEILLILGIIILIFGAKKLPEVGSGLGRAIQNFKKASSESEEIDVTPSKDKNKDA</sequence>
<protein>
    <recommendedName>
        <fullName evidence="1">Sec-independent protein translocase protein TatA</fullName>
    </recommendedName>
</protein>
<proteinExistence type="inferred from homology"/>
<reference key="1">
    <citation type="submission" date="2009-06" db="EMBL/GenBank/DDBJ databases">
        <title>Complete sequence of Desulfovibrio salexigens DSM 2638.</title>
        <authorList>
            <consortium name="US DOE Joint Genome Institute"/>
            <person name="Lucas S."/>
            <person name="Copeland A."/>
            <person name="Lapidus A."/>
            <person name="Glavina del Rio T."/>
            <person name="Tice H."/>
            <person name="Bruce D."/>
            <person name="Goodwin L."/>
            <person name="Pitluck S."/>
            <person name="Munk A.C."/>
            <person name="Brettin T."/>
            <person name="Detter J.C."/>
            <person name="Han C."/>
            <person name="Tapia R."/>
            <person name="Larimer F."/>
            <person name="Land M."/>
            <person name="Hauser L."/>
            <person name="Kyrpides N."/>
            <person name="Anderson I."/>
            <person name="Wall J.D."/>
            <person name="Arkin A.P."/>
            <person name="Dehal P."/>
            <person name="Chivian D."/>
            <person name="Giles B."/>
            <person name="Hazen T.C."/>
        </authorList>
    </citation>
    <scope>NUCLEOTIDE SEQUENCE [LARGE SCALE GENOMIC DNA]</scope>
    <source>
        <strain>ATCC 14822 / DSM 2638 / NCIMB 8403 / VKM B-1763</strain>
    </source>
</reference>
<accession>C6BXF6</accession>